<reference key="1">
    <citation type="submission" date="2005-08" db="EMBL/GenBank/DDBJ databases">
        <title>Complete sequence of Pelodictyon luteolum DSM 273.</title>
        <authorList>
            <consortium name="US DOE Joint Genome Institute"/>
            <person name="Copeland A."/>
            <person name="Lucas S."/>
            <person name="Lapidus A."/>
            <person name="Barry K."/>
            <person name="Detter J.C."/>
            <person name="Glavina T."/>
            <person name="Hammon N."/>
            <person name="Israni S."/>
            <person name="Pitluck S."/>
            <person name="Bryant D."/>
            <person name="Schmutz J."/>
            <person name="Larimer F."/>
            <person name="Land M."/>
            <person name="Kyrpides N."/>
            <person name="Ivanova N."/>
            <person name="Richardson P."/>
        </authorList>
    </citation>
    <scope>NUCLEOTIDE SEQUENCE [LARGE SCALE GENOMIC DNA]</scope>
    <source>
        <strain>DSM 273 / BCRC 81028 / 2530</strain>
    </source>
</reference>
<gene>
    <name evidence="1" type="primary">yidC</name>
    <name type="ordered locus">Plut_2129</name>
</gene>
<keyword id="KW-0997">Cell inner membrane</keyword>
<keyword id="KW-1003">Cell membrane</keyword>
<keyword id="KW-0143">Chaperone</keyword>
<keyword id="KW-0472">Membrane</keyword>
<keyword id="KW-0653">Protein transport</keyword>
<keyword id="KW-1185">Reference proteome</keyword>
<keyword id="KW-0812">Transmembrane</keyword>
<keyword id="KW-1133">Transmembrane helix</keyword>
<keyword id="KW-0813">Transport</keyword>
<dbReference type="EMBL" id="CP000096">
    <property type="protein sequence ID" value="ABB24971.1"/>
    <property type="molecule type" value="Genomic_DNA"/>
</dbReference>
<dbReference type="RefSeq" id="WP_011358841.1">
    <property type="nucleotide sequence ID" value="NC_007512.1"/>
</dbReference>
<dbReference type="SMR" id="Q3B110"/>
<dbReference type="STRING" id="319225.Plut_2129"/>
<dbReference type="KEGG" id="plt:Plut_2129"/>
<dbReference type="eggNOG" id="COG0706">
    <property type="taxonomic scope" value="Bacteria"/>
</dbReference>
<dbReference type="HOGENOM" id="CLU_016535_2_0_10"/>
<dbReference type="OrthoDB" id="9780552at2"/>
<dbReference type="Proteomes" id="UP000002709">
    <property type="component" value="Chromosome"/>
</dbReference>
<dbReference type="GO" id="GO:0005886">
    <property type="term" value="C:plasma membrane"/>
    <property type="evidence" value="ECO:0007669"/>
    <property type="project" value="UniProtKB-SubCell"/>
</dbReference>
<dbReference type="GO" id="GO:0032977">
    <property type="term" value="F:membrane insertase activity"/>
    <property type="evidence" value="ECO:0007669"/>
    <property type="project" value="InterPro"/>
</dbReference>
<dbReference type="GO" id="GO:0051205">
    <property type="term" value="P:protein insertion into membrane"/>
    <property type="evidence" value="ECO:0007669"/>
    <property type="project" value="TreeGrafter"/>
</dbReference>
<dbReference type="GO" id="GO:0015031">
    <property type="term" value="P:protein transport"/>
    <property type="evidence" value="ECO:0007669"/>
    <property type="project" value="UniProtKB-KW"/>
</dbReference>
<dbReference type="CDD" id="cd20070">
    <property type="entry name" value="5TM_YidC_Alb3"/>
    <property type="match status" value="1"/>
</dbReference>
<dbReference type="CDD" id="cd19961">
    <property type="entry name" value="EcYidC-like_peri"/>
    <property type="match status" value="1"/>
</dbReference>
<dbReference type="Gene3D" id="2.70.98.90">
    <property type="match status" value="1"/>
</dbReference>
<dbReference type="HAMAP" id="MF_01810">
    <property type="entry name" value="YidC_type1"/>
    <property type="match status" value="1"/>
</dbReference>
<dbReference type="InterPro" id="IPR019998">
    <property type="entry name" value="Membr_insert_YidC"/>
</dbReference>
<dbReference type="InterPro" id="IPR028053">
    <property type="entry name" value="Membr_insert_YidC_N"/>
</dbReference>
<dbReference type="InterPro" id="IPR001708">
    <property type="entry name" value="YidC/ALB3/OXA1/COX18"/>
</dbReference>
<dbReference type="InterPro" id="IPR028055">
    <property type="entry name" value="YidC/Oxa/ALB_C"/>
</dbReference>
<dbReference type="InterPro" id="IPR047196">
    <property type="entry name" value="YidC_ALB_C"/>
</dbReference>
<dbReference type="InterPro" id="IPR038221">
    <property type="entry name" value="YidC_periplasmic_sf"/>
</dbReference>
<dbReference type="NCBIfam" id="TIGR03593">
    <property type="entry name" value="yidC_nterm"/>
    <property type="match status" value="1"/>
</dbReference>
<dbReference type="NCBIfam" id="TIGR03592">
    <property type="entry name" value="yidC_oxa1_cterm"/>
    <property type="match status" value="1"/>
</dbReference>
<dbReference type="PANTHER" id="PTHR12428:SF65">
    <property type="entry name" value="CYTOCHROME C OXIDASE ASSEMBLY PROTEIN COX18, MITOCHONDRIAL"/>
    <property type="match status" value="1"/>
</dbReference>
<dbReference type="PANTHER" id="PTHR12428">
    <property type="entry name" value="OXA1"/>
    <property type="match status" value="1"/>
</dbReference>
<dbReference type="Pfam" id="PF02096">
    <property type="entry name" value="60KD_IMP"/>
    <property type="match status" value="1"/>
</dbReference>
<dbReference type="Pfam" id="PF14849">
    <property type="entry name" value="YidC_periplas"/>
    <property type="match status" value="1"/>
</dbReference>
<dbReference type="PRINTS" id="PR00701">
    <property type="entry name" value="60KDINNERMP"/>
</dbReference>
<dbReference type="PRINTS" id="PR01900">
    <property type="entry name" value="YIDCPROTEIN"/>
</dbReference>
<evidence type="ECO:0000255" key="1">
    <source>
        <dbReference type="HAMAP-Rule" id="MF_01810"/>
    </source>
</evidence>
<proteinExistence type="inferred from homology"/>
<protein>
    <recommendedName>
        <fullName evidence="1">Membrane protein insertase YidC</fullName>
    </recommendedName>
    <alternativeName>
        <fullName evidence="1">Foldase YidC</fullName>
    </alternativeName>
    <alternativeName>
        <fullName evidence="1">Membrane integrase YidC</fullName>
    </alternativeName>
    <alternativeName>
        <fullName evidence="1">Membrane protein YidC</fullName>
    </alternativeName>
</protein>
<comment type="function">
    <text evidence="1">Required for the insertion and/or proper folding and/or complex formation of integral membrane proteins into the membrane. Involved in integration of membrane proteins that insert both dependently and independently of the Sec translocase complex, as well as at least some lipoproteins. Aids folding of multispanning membrane proteins.</text>
</comment>
<comment type="subunit">
    <text evidence="1">Interacts with the Sec translocase complex via SecD. Specifically interacts with transmembrane segments of nascent integral membrane proteins during membrane integration.</text>
</comment>
<comment type="subcellular location">
    <subcellularLocation>
        <location evidence="1">Cell inner membrane</location>
        <topology evidence="1">Multi-pass membrane protein</topology>
    </subcellularLocation>
</comment>
<comment type="similarity">
    <text evidence="1">Belongs to the OXA1/ALB3/YidC family. Type 1 subfamily.</text>
</comment>
<organism>
    <name type="scientific">Chlorobium luteolum (strain DSM 273 / BCRC 81028 / 2530)</name>
    <name type="common">Pelodictyon luteolum</name>
    <dbReference type="NCBI Taxonomy" id="319225"/>
    <lineage>
        <taxon>Bacteria</taxon>
        <taxon>Pseudomonadati</taxon>
        <taxon>Chlorobiota</taxon>
        <taxon>Chlorobiia</taxon>
        <taxon>Chlorobiales</taxon>
        <taxon>Chlorobiaceae</taxon>
        <taxon>Chlorobium/Pelodictyon group</taxon>
        <taxon>Pelodictyon</taxon>
    </lineage>
</organism>
<sequence>MDRNSVTGLALIALIMIVWLQFMSPEKKPLQQVTDAGKARTEQVAAEINSDMQPAAVPATEDSFGMFAPAASGTERLTVIDNDLFHAVVSSKGATLKSLVLKKHLDGNLKPFDLVSDAKNGALSMLFLTREGRRIDTRDLYFAGSSLDTLHTIKGKETYALSYRLALSPRQSIEVSYTFTGDSYRIGYDVKLTGLSGSLAGNEYQVQWDGGLPYTEKNRDDEARSAQASAYLGGSLVKLDAEKDGRSYREEQSGDARWVAVRNKYFIAALIPEDRTAGFYLDGQKERGNAYENYLASLKMEVPASEEVVDSRFSLYLGPLDYNTVKAQHADIEKIMDFGWDWLTRPFAEFVILPAFTWMNRFVSNYGLIIIIFAFLIKLVTYPLSTASTKSMKKMAALQPMLKELQDKYKDNPAKLQSELGRIYKEAGVNPLGGCLPVVLQMPLLFAMFYVFRSSIQLRQHGFLWVKDLSVPDSILDFGFTIPMYGSHIALLPILMAVTVFLQQKITPTAQSNDQMKIMLYMFPAMMLLFFNNMPSGLALYYLMFNVFSVAQQFYINSTSSAADLPQVSISAPSRPKKKKSGSGK</sequence>
<accession>Q3B110</accession>
<feature type="chain" id="PRO_1000070132" description="Membrane protein insertase YidC">
    <location>
        <begin position="1"/>
        <end position="585"/>
    </location>
</feature>
<feature type="transmembrane region" description="Helical" evidence="1">
    <location>
        <begin position="5"/>
        <end position="25"/>
    </location>
</feature>
<feature type="transmembrane region" description="Helical" evidence="1">
    <location>
        <begin position="338"/>
        <end position="358"/>
    </location>
</feature>
<feature type="transmembrane region" description="Helical" evidence="1">
    <location>
        <begin position="362"/>
        <end position="382"/>
    </location>
</feature>
<feature type="transmembrane region" description="Helical" evidence="1">
    <location>
        <begin position="432"/>
        <end position="452"/>
    </location>
</feature>
<feature type="transmembrane region" description="Helical" evidence="1">
    <location>
        <begin position="482"/>
        <end position="502"/>
    </location>
</feature>
<feature type="transmembrane region" description="Helical" evidence="1">
    <location>
        <begin position="518"/>
        <end position="538"/>
    </location>
</feature>
<name>YIDC_CHLL3</name>